<evidence type="ECO:0000255" key="1">
    <source>
        <dbReference type="HAMAP-Rule" id="MF_01862"/>
    </source>
</evidence>
<dbReference type="EC" id="2.1.1.172" evidence="1"/>
<dbReference type="EMBL" id="CP001113">
    <property type="protein sequence ID" value="ACF63430.1"/>
    <property type="molecule type" value="Genomic_DNA"/>
</dbReference>
<dbReference type="RefSeq" id="WP_001272272.1">
    <property type="nucleotide sequence ID" value="NZ_CCMR01000003.1"/>
</dbReference>
<dbReference type="SMR" id="B4T4F9"/>
<dbReference type="KEGG" id="see:SNSL254_A4912"/>
<dbReference type="HOGENOM" id="CLU_049581_0_1_6"/>
<dbReference type="Proteomes" id="UP000008824">
    <property type="component" value="Chromosome"/>
</dbReference>
<dbReference type="GO" id="GO:0005737">
    <property type="term" value="C:cytoplasm"/>
    <property type="evidence" value="ECO:0007669"/>
    <property type="project" value="UniProtKB-SubCell"/>
</dbReference>
<dbReference type="GO" id="GO:0052914">
    <property type="term" value="F:16S rRNA (guanine(1207)-N(2))-methyltransferase activity"/>
    <property type="evidence" value="ECO:0007669"/>
    <property type="project" value="UniProtKB-EC"/>
</dbReference>
<dbReference type="GO" id="GO:0003676">
    <property type="term" value="F:nucleic acid binding"/>
    <property type="evidence" value="ECO:0007669"/>
    <property type="project" value="InterPro"/>
</dbReference>
<dbReference type="CDD" id="cd02440">
    <property type="entry name" value="AdoMet_MTases"/>
    <property type="match status" value="1"/>
</dbReference>
<dbReference type="FunFam" id="3.40.50.150:FF:000058">
    <property type="entry name" value="Ribosomal RNA small subunit methyltransferase C"/>
    <property type="match status" value="1"/>
</dbReference>
<dbReference type="Gene3D" id="3.40.50.150">
    <property type="entry name" value="Vaccinia Virus protein VP39"/>
    <property type="match status" value="2"/>
</dbReference>
<dbReference type="HAMAP" id="MF_01862">
    <property type="entry name" value="16SrRNA_methyltr_C"/>
    <property type="match status" value="1"/>
</dbReference>
<dbReference type="InterPro" id="IPR002052">
    <property type="entry name" value="DNA_methylase_N6_adenine_CS"/>
</dbReference>
<dbReference type="InterPro" id="IPR013675">
    <property type="entry name" value="Mtase_sm_N"/>
</dbReference>
<dbReference type="InterPro" id="IPR023543">
    <property type="entry name" value="rRNA_ssu_MeTfrase_C"/>
</dbReference>
<dbReference type="InterPro" id="IPR046977">
    <property type="entry name" value="RsmC/RlmG"/>
</dbReference>
<dbReference type="InterPro" id="IPR029063">
    <property type="entry name" value="SAM-dependent_MTases_sf"/>
</dbReference>
<dbReference type="InterPro" id="IPR007848">
    <property type="entry name" value="Small_mtfrase_dom"/>
</dbReference>
<dbReference type="NCBIfam" id="NF007023">
    <property type="entry name" value="PRK09489.1"/>
    <property type="match status" value="1"/>
</dbReference>
<dbReference type="PANTHER" id="PTHR47816">
    <property type="entry name" value="RIBOSOMAL RNA SMALL SUBUNIT METHYLTRANSFERASE C"/>
    <property type="match status" value="1"/>
</dbReference>
<dbReference type="PANTHER" id="PTHR47816:SF4">
    <property type="entry name" value="RIBOSOMAL RNA SMALL SUBUNIT METHYLTRANSFERASE C"/>
    <property type="match status" value="1"/>
</dbReference>
<dbReference type="Pfam" id="PF05175">
    <property type="entry name" value="MTS"/>
    <property type="match status" value="1"/>
</dbReference>
<dbReference type="Pfam" id="PF08468">
    <property type="entry name" value="MTS_N"/>
    <property type="match status" value="1"/>
</dbReference>
<dbReference type="SUPFAM" id="SSF53335">
    <property type="entry name" value="S-adenosyl-L-methionine-dependent methyltransferases"/>
    <property type="match status" value="1"/>
</dbReference>
<sequence length="342" mass="37649">MSAFTPASEVLLRHSDDFEQSRILFAGDLQDDLPARFECAASRAHTQQFHHWQVLSRQMGDNVRFSLVAQASDVADCDTLIYYWPKNKPEAQFQLMNILSLMPSGSDVFVVGENRSGVRSAEQMLADYAPLNKVDSARRCGLYHGRLEKQPQFSLESWWAEYNIDGLTIKTLPGVFSRDGLDVGSQLLLSTLTPHTKGKVLDVGCGAGVLSAALASHSPKVRLTLCDVSAPAVEASRATLAANGLEGEVFASNIFSEVKGRFDMIISNPPFHDGMQTSLDAAQTLIRGAVRHLNSGGELRIVANAFLPYPKILDETFGFHEVIAQTGRFKVYRTVMTRQAKK</sequence>
<reference key="1">
    <citation type="journal article" date="2011" name="J. Bacteriol.">
        <title>Comparative genomics of 28 Salmonella enterica isolates: evidence for CRISPR-mediated adaptive sublineage evolution.</title>
        <authorList>
            <person name="Fricke W.F."/>
            <person name="Mammel M.K."/>
            <person name="McDermott P.F."/>
            <person name="Tartera C."/>
            <person name="White D.G."/>
            <person name="Leclerc J.E."/>
            <person name="Ravel J."/>
            <person name="Cebula T.A."/>
        </authorList>
    </citation>
    <scope>NUCLEOTIDE SEQUENCE [LARGE SCALE GENOMIC DNA]</scope>
    <source>
        <strain>SL254</strain>
    </source>
</reference>
<proteinExistence type="inferred from homology"/>
<name>RSMC_SALNS</name>
<organism>
    <name type="scientific">Salmonella newport (strain SL254)</name>
    <dbReference type="NCBI Taxonomy" id="423368"/>
    <lineage>
        <taxon>Bacteria</taxon>
        <taxon>Pseudomonadati</taxon>
        <taxon>Pseudomonadota</taxon>
        <taxon>Gammaproteobacteria</taxon>
        <taxon>Enterobacterales</taxon>
        <taxon>Enterobacteriaceae</taxon>
        <taxon>Salmonella</taxon>
    </lineage>
</organism>
<gene>
    <name evidence="1" type="primary">rsmC</name>
    <name type="ordered locus">SNSL254_A4912</name>
</gene>
<feature type="chain" id="PRO_0000369758" description="Ribosomal RNA small subunit methyltransferase C">
    <location>
        <begin position="1"/>
        <end position="342"/>
    </location>
</feature>
<comment type="function">
    <text evidence="1">Specifically methylates the guanine in position 1207 of 16S rRNA in the 30S particle.</text>
</comment>
<comment type="catalytic activity">
    <reaction evidence="1">
        <text>guanosine(1207) in 16S rRNA + S-adenosyl-L-methionine = N(2)-methylguanosine(1207) in 16S rRNA + S-adenosyl-L-homocysteine + H(+)</text>
        <dbReference type="Rhea" id="RHEA:42736"/>
        <dbReference type="Rhea" id="RHEA-COMP:10213"/>
        <dbReference type="Rhea" id="RHEA-COMP:10214"/>
        <dbReference type="ChEBI" id="CHEBI:15378"/>
        <dbReference type="ChEBI" id="CHEBI:57856"/>
        <dbReference type="ChEBI" id="CHEBI:59789"/>
        <dbReference type="ChEBI" id="CHEBI:74269"/>
        <dbReference type="ChEBI" id="CHEBI:74481"/>
        <dbReference type="EC" id="2.1.1.172"/>
    </reaction>
</comment>
<comment type="subunit">
    <text evidence="1">Monomer.</text>
</comment>
<comment type="subcellular location">
    <subcellularLocation>
        <location evidence="1">Cytoplasm</location>
    </subcellularLocation>
</comment>
<comment type="similarity">
    <text evidence="1">Belongs to the methyltransferase superfamily. RsmC family.</text>
</comment>
<accession>B4T4F9</accession>
<keyword id="KW-0963">Cytoplasm</keyword>
<keyword id="KW-0489">Methyltransferase</keyword>
<keyword id="KW-0698">rRNA processing</keyword>
<keyword id="KW-0949">S-adenosyl-L-methionine</keyword>
<keyword id="KW-0808">Transferase</keyword>
<protein>
    <recommendedName>
        <fullName evidence="1">Ribosomal RNA small subunit methyltransferase C</fullName>
        <ecNumber evidence="1">2.1.1.172</ecNumber>
    </recommendedName>
    <alternativeName>
        <fullName evidence="1">16S rRNA m2G1207 methyltransferase</fullName>
    </alternativeName>
    <alternativeName>
        <fullName evidence="1">rRNA (guanine-N(2)-)-methyltransferase RsmC</fullName>
    </alternativeName>
</protein>